<dbReference type="EC" id="2.3.3.9" evidence="1"/>
<dbReference type="EMBL" id="AE000516">
    <property type="protein sequence ID" value="AAK46156.1"/>
    <property type="molecule type" value="Genomic_DNA"/>
</dbReference>
<dbReference type="PIR" id="F70722">
    <property type="entry name" value="F70722"/>
</dbReference>
<dbReference type="RefSeq" id="WP_003409271.1">
    <property type="nucleotide sequence ID" value="NZ_KK341227.1"/>
</dbReference>
<dbReference type="PDB" id="1N8I">
    <property type="method" value="X-ray"/>
    <property type="resolution" value="2.10 A"/>
    <property type="chains" value="A=1-741"/>
</dbReference>
<dbReference type="PDB" id="1N8W">
    <property type="method" value="X-ray"/>
    <property type="resolution" value="2.70 A"/>
    <property type="chains" value="A/B=1-741"/>
</dbReference>
<dbReference type="PDBsum" id="1N8I"/>
<dbReference type="PDBsum" id="1N8W"/>
<dbReference type="SMR" id="P9WK16"/>
<dbReference type="BindingDB" id="P9WK16"/>
<dbReference type="KEGG" id="mtc:MT1885"/>
<dbReference type="PATRIC" id="fig|83331.31.peg.2029"/>
<dbReference type="HOGENOM" id="CLU_028446_1_0_11"/>
<dbReference type="UniPathway" id="UPA00703">
    <property type="reaction ID" value="UER00720"/>
</dbReference>
<dbReference type="Proteomes" id="UP000001020">
    <property type="component" value="Chromosome"/>
</dbReference>
<dbReference type="GO" id="GO:0009986">
    <property type="term" value="C:cell surface"/>
    <property type="evidence" value="ECO:0000314"/>
    <property type="project" value="CAFA"/>
</dbReference>
<dbReference type="GO" id="GO:0005829">
    <property type="term" value="C:cytosol"/>
    <property type="evidence" value="ECO:0007669"/>
    <property type="project" value="TreeGrafter"/>
</dbReference>
<dbReference type="GO" id="GO:0000287">
    <property type="term" value="F:magnesium ion binding"/>
    <property type="evidence" value="ECO:0000314"/>
    <property type="project" value="CAFA"/>
</dbReference>
<dbReference type="GO" id="GO:0004474">
    <property type="term" value="F:malate synthase activity"/>
    <property type="evidence" value="ECO:0000314"/>
    <property type="project" value="CAFA"/>
</dbReference>
<dbReference type="GO" id="GO:0030145">
    <property type="term" value="F:manganese ion binding"/>
    <property type="evidence" value="ECO:0000314"/>
    <property type="project" value="CAFA"/>
</dbReference>
<dbReference type="GO" id="GO:0009436">
    <property type="term" value="P:glyoxylate catabolic process"/>
    <property type="evidence" value="ECO:0007669"/>
    <property type="project" value="TreeGrafter"/>
</dbReference>
<dbReference type="GO" id="GO:0006097">
    <property type="term" value="P:glyoxylate cycle"/>
    <property type="evidence" value="ECO:0000314"/>
    <property type="project" value="CAFA"/>
</dbReference>
<dbReference type="GO" id="GO:0006099">
    <property type="term" value="P:tricarboxylic acid cycle"/>
    <property type="evidence" value="ECO:0007669"/>
    <property type="project" value="UniProtKB-KW"/>
</dbReference>
<dbReference type="CDD" id="cd00728">
    <property type="entry name" value="malate_synt_G"/>
    <property type="match status" value="1"/>
</dbReference>
<dbReference type="FunFam" id="3.20.20.360:FF:000002">
    <property type="entry name" value="Malate synthase G"/>
    <property type="match status" value="1"/>
</dbReference>
<dbReference type="Gene3D" id="3.20.20.360">
    <property type="entry name" value="Malate synthase, domain 3"/>
    <property type="match status" value="2"/>
</dbReference>
<dbReference type="Gene3D" id="1.20.1220.12">
    <property type="entry name" value="Malate synthase, domain III"/>
    <property type="match status" value="1"/>
</dbReference>
<dbReference type="HAMAP" id="MF_00641">
    <property type="entry name" value="Malate_synth_G"/>
    <property type="match status" value="1"/>
</dbReference>
<dbReference type="InterPro" id="IPR044856">
    <property type="entry name" value="Malate_synth_C_sf"/>
</dbReference>
<dbReference type="InterPro" id="IPR011076">
    <property type="entry name" value="Malate_synth_sf"/>
</dbReference>
<dbReference type="InterPro" id="IPR001465">
    <property type="entry name" value="Malate_synthase_TIM"/>
</dbReference>
<dbReference type="InterPro" id="IPR006253">
    <property type="entry name" value="Malate_synthG"/>
</dbReference>
<dbReference type="InterPro" id="IPR048355">
    <property type="entry name" value="MS_C"/>
</dbReference>
<dbReference type="InterPro" id="IPR048356">
    <property type="entry name" value="MS_N"/>
</dbReference>
<dbReference type="InterPro" id="IPR046363">
    <property type="entry name" value="MS_N_TIM-barrel_dom"/>
</dbReference>
<dbReference type="InterPro" id="IPR048357">
    <property type="entry name" value="MSG_insertion"/>
</dbReference>
<dbReference type="NCBIfam" id="TIGR01345">
    <property type="entry name" value="malate_syn_G"/>
    <property type="match status" value="1"/>
</dbReference>
<dbReference type="NCBIfam" id="NF002825">
    <property type="entry name" value="PRK02999.1"/>
    <property type="match status" value="1"/>
</dbReference>
<dbReference type="PANTHER" id="PTHR42739">
    <property type="entry name" value="MALATE SYNTHASE G"/>
    <property type="match status" value="1"/>
</dbReference>
<dbReference type="PANTHER" id="PTHR42739:SF1">
    <property type="entry name" value="MALATE SYNTHASE G"/>
    <property type="match status" value="1"/>
</dbReference>
<dbReference type="Pfam" id="PF20659">
    <property type="entry name" value="MS_C"/>
    <property type="match status" value="1"/>
</dbReference>
<dbReference type="Pfam" id="PF20656">
    <property type="entry name" value="MS_N"/>
    <property type="match status" value="1"/>
</dbReference>
<dbReference type="Pfam" id="PF01274">
    <property type="entry name" value="MS_TIM-barrel"/>
    <property type="match status" value="1"/>
</dbReference>
<dbReference type="Pfam" id="PF20658">
    <property type="entry name" value="MSG_insertion"/>
    <property type="match status" value="1"/>
</dbReference>
<dbReference type="SUPFAM" id="SSF51645">
    <property type="entry name" value="Malate synthase G"/>
    <property type="match status" value="1"/>
</dbReference>
<proteinExistence type="evidence at protein level"/>
<sequence length="741" mass="80403">MTDRVSVGNLRIARVLYDFVNNEALPGTDIDPDSFWAGVDKVVADLTPQNQALLNARDELQAQIDKWHRRRVIEPIDMDAYRQFLTEIGYLLPEPDDFTITTSGVDAEITTTAGPQLVVPVLNARFALNAANARWGSLYDALYGTDVIPETDGAEKGPTYNKVRGDKVIAYARKFLDDSVPLSSGSFGDATGFTVQDGQLVVALPDKSTGLANPGQFAGYTGAAESPTSVLLINHGLHIEILIDPESQVGTTDRAGVKDVILESAITTIMDFEDSVAAVDAADKVLGYRNWLGLNKGDLAAAVDKDGTAFLRVLNRDRNYTAPGGGQFTLPGRSLMFVRNVGHLMTNDAIVDTDGSEVFEGIMDALFTGLIAIHGLKASDVNGPLINSRTGSIYIVKPKMHGPAEVAFTCELFSRVEDVLGLPQNTMKIGIMDEERRTTVNLKACIKAAADRVVFINTGFLDRTGDEIHTSMEAGPMVRKGTMKSQPWILAYEDHNVDAGLAAGFSGRAQVGKGMWTMTELMADMVETKIAQPRAGASTAWVPSPTAATLHALHYHQVDVAAVQQGLAGKRRATIEQLLTIPLAKELAWAPDEIREEVDNNCQSILGYVVRWVDQGVGCSKVPDIHDVALMEDRATLRISSQLLANWLRHGVITSADVRASLERMAPLVDRQNAGDVAYRPMAPNFDDSIAFLAAQELILSGAQQPNGYTEPILHRRRREFKARAAEKPAPSDRAGDDAAR</sequence>
<gene>
    <name evidence="1" type="primary">glcB</name>
    <name type="ordered locus">MT1885</name>
</gene>
<name>MASZ_MYCTO</name>
<organism>
    <name type="scientific">Mycobacterium tuberculosis (strain CDC 1551 / Oshkosh)</name>
    <dbReference type="NCBI Taxonomy" id="83331"/>
    <lineage>
        <taxon>Bacteria</taxon>
        <taxon>Bacillati</taxon>
        <taxon>Actinomycetota</taxon>
        <taxon>Actinomycetes</taxon>
        <taxon>Mycobacteriales</taxon>
        <taxon>Mycobacteriaceae</taxon>
        <taxon>Mycobacterium</taxon>
        <taxon>Mycobacterium tuberculosis complex</taxon>
    </lineage>
</organism>
<reference key="1">
    <citation type="journal article" date="2002" name="J. Bacteriol.">
        <title>Whole-genome comparison of Mycobacterium tuberculosis clinical and laboratory strains.</title>
        <authorList>
            <person name="Fleischmann R.D."/>
            <person name="Alland D."/>
            <person name="Eisen J.A."/>
            <person name="Carpenter L."/>
            <person name="White O."/>
            <person name="Peterson J.D."/>
            <person name="DeBoy R.T."/>
            <person name="Dodson R.J."/>
            <person name="Gwinn M.L."/>
            <person name="Haft D.H."/>
            <person name="Hickey E.K."/>
            <person name="Kolonay J.F."/>
            <person name="Nelson W.C."/>
            <person name="Umayam L.A."/>
            <person name="Ermolaeva M.D."/>
            <person name="Salzberg S.L."/>
            <person name="Delcher A."/>
            <person name="Utterback T.R."/>
            <person name="Weidman J.F."/>
            <person name="Khouri H.M."/>
            <person name="Gill J."/>
            <person name="Mikula A."/>
            <person name="Bishai W."/>
            <person name="Jacobs W.R. Jr."/>
            <person name="Venter J.C."/>
            <person name="Fraser C.M."/>
        </authorList>
    </citation>
    <scope>NUCLEOTIDE SEQUENCE [LARGE SCALE GENOMIC DNA]</scope>
    <source>
        <strain>CDC 1551 / Oshkosh</strain>
    </source>
</reference>
<reference key="2">
    <citation type="journal article" date="2003" name="J. Biol. Chem.">
        <title>Biochemical and structural studies of malate synthase from Mycobacterium tuberculosis.</title>
        <authorList>
            <person name="Smith C.V."/>
            <person name="Huang C.C."/>
            <person name="Miczak A."/>
            <person name="Russell D.G."/>
            <person name="Sacchettini J.C."/>
            <person name="Honer zu Bentrup K."/>
        </authorList>
    </citation>
    <scope>X-RAY CRYSTALLOGRAPHY (2.1 ANGSTROMS) IN COMPLEX WITH SUBSTRATES AND MAGNESIUM ION</scope>
    <scope>FUNCTION</scope>
    <scope>CATALYTIC ACTIVITY</scope>
    <scope>ACTIVE SITE</scope>
    <scope>REACTION MECHANISM</scope>
    <scope>BIOPHYSICOCHEMICAL PROPERTIES</scope>
    <scope>ACTIVITY REGULATION</scope>
    <scope>COFACTOR</scope>
    <scope>SUBUNIT</scope>
    <source>
        <strain>CDC 1551 / Oshkosh</strain>
    </source>
</reference>
<feature type="chain" id="PRO_0000427732" description="Malate synthase G">
    <location>
        <begin position="1"/>
        <end position="741"/>
    </location>
</feature>
<feature type="region of interest" description="Disordered" evidence="2">
    <location>
        <begin position="718"/>
        <end position="741"/>
    </location>
</feature>
<feature type="compositionally biased region" description="Basic and acidic residues" evidence="2">
    <location>
        <begin position="722"/>
        <end position="741"/>
    </location>
</feature>
<feature type="active site" description="Proton acceptor" evidence="1 3">
    <location>
        <position position="339"/>
    </location>
</feature>
<feature type="active site" description="Proton donor" evidence="1 3">
    <location>
        <position position="633"/>
    </location>
</feature>
<feature type="binding site">
    <location>
        <position position="118"/>
    </location>
    <ligand>
        <name>acetyl-CoA</name>
        <dbReference type="ChEBI" id="CHEBI:57288"/>
    </ligand>
</feature>
<feature type="binding site">
    <location>
        <begin position="125"/>
        <end position="129"/>
    </location>
    <ligand>
        <name>acetyl-CoA</name>
        <dbReference type="ChEBI" id="CHEBI:57288"/>
    </ligand>
</feature>
<feature type="binding site">
    <location>
        <position position="275"/>
    </location>
    <ligand>
        <name>acetyl-CoA</name>
        <dbReference type="ChEBI" id="CHEBI:57288"/>
    </ligand>
</feature>
<feature type="binding site">
    <location>
        <position position="305"/>
    </location>
    <ligand>
        <name>acetyl-CoA</name>
        <dbReference type="ChEBI" id="CHEBI:57288"/>
    </ligand>
</feature>
<feature type="binding site">
    <location>
        <position position="312"/>
    </location>
    <ligand>
        <name>acetyl-CoA</name>
        <dbReference type="ChEBI" id="CHEBI:57288"/>
    </ligand>
</feature>
<feature type="binding site">
    <location>
        <position position="339"/>
    </location>
    <ligand>
        <name>glyoxylate</name>
        <dbReference type="ChEBI" id="CHEBI:36655"/>
    </ligand>
</feature>
<feature type="binding site">
    <location>
        <position position="434"/>
    </location>
    <ligand>
        <name>glyoxylate</name>
        <dbReference type="ChEBI" id="CHEBI:36655"/>
    </ligand>
</feature>
<feature type="binding site">
    <location>
        <position position="434"/>
    </location>
    <ligand>
        <name>Mg(2+)</name>
        <dbReference type="ChEBI" id="CHEBI:18420"/>
    </ligand>
</feature>
<feature type="binding site">
    <location>
        <begin position="459"/>
        <end position="462"/>
    </location>
    <ligand>
        <name>glyoxylate</name>
        <dbReference type="ChEBI" id="CHEBI:36655"/>
    </ligand>
</feature>
<feature type="binding site">
    <location>
        <position position="462"/>
    </location>
    <ligand>
        <name>Mg(2+)</name>
        <dbReference type="ChEBI" id="CHEBI:18420"/>
    </ligand>
</feature>
<feature type="binding site">
    <location>
        <position position="543"/>
    </location>
    <ligand>
        <name>acetyl-CoA</name>
        <dbReference type="ChEBI" id="CHEBI:57288"/>
    </ligand>
</feature>
<feature type="binding site">
    <location>
        <begin position="618"/>
        <end position="621"/>
    </location>
    <ligand>
        <name>acetyl-CoA</name>
        <dbReference type="ChEBI" id="CHEBI:57288"/>
    </ligand>
</feature>
<feature type="binding site">
    <location>
        <position position="633"/>
    </location>
    <ligand>
        <name>acetyl-CoA</name>
        <dbReference type="ChEBI" id="CHEBI:57288"/>
    </ligand>
</feature>
<feature type="modified residue" description="Cysteine sulfenic acid (-SOH)" evidence="1">
    <location>
        <position position="619"/>
    </location>
</feature>
<feature type="strand" evidence="4">
    <location>
        <begin position="4"/>
        <end position="7"/>
    </location>
</feature>
<feature type="strand" evidence="4">
    <location>
        <begin position="10"/>
        <end position="13"/>
    </location>
</feature>
<feature type="helix" evidence="4">
    <location>
        <begin position="14"/>
        <end position="22"/>
    </location>
</feature>
<feature type="turn" evidence="5">
    <location>
        <begin position="26"/>
        <end position="29"/>
    </location>
</feature>
<feature type="helix" evidence="4">
    <location>
        <begin position="32"/>
        <end position="69"/>
    </location>
</feature>
<feature type="helix" evidence="4">
    <location>
        <begin position="78"/>
        <end position="87"/>
    </location>
</feature>
<feature type="helix" evidence="4">
    <location>
        <begin position="107"/>
        <end position="110"/>
    </location>
</feature>
<feature type="strand" evidence="4">
    <location>
        <begin position="116"/>
        <end position="120"/>
    </location>
</feature>
<feature type="helix" evidence="4">
    <location>
        <begin position="124"/>
        <end position="131"/>
    </location>
</feature>
<feature type="helix" evidence="4">
    <location>
        <begin position="132"/>
        <end position="134"/>
    </location>
</feature>
<feature type="strand" evidence="4">
    <location>
        <begin position="135"/>
        <end position="137"/>
    </location>
</feature>
<feature type="helix" evidence="4">
    <location>
        <begin position="138"/>
        <end position="143"/>
    </location>
</feature>
<feature type="turn" evidence="5">
    <location>
        <begin position="151"/>
        <end position="153"/>
    </location>
</feature>
<feature type="helix" evidence="4">
    <location>
        <begin position="162"/>
        <end position="179"/>
    </location>
</feature>
<feature type="strand" evidence="4">
    <location>
        <begin position="182"/>
        <end position="185"/>
    </location>
</feature>
<feature type="helix" evidence="4">
    <location>
        <begin position="187"/>
        <end position="189"/>
    </location>
</feature>
<feature type="strand" evidence="4">
    <location>
        <begin position="192"/>
        <end position="196"/>
    </location>
</feature>
<feature type="strand" evidence="4">
    <location>
        <begin position="199"/>
        <end position="203"/>
    </location>
</feature>
<feature type="strand" evidence="4">
    <location>
        <begin position="211"/>
        <end position="213"/>
    </location>
</feature>
<feature type="helix" evidence="4">
    <location>
        <begin position="214"/>
        <end position="216"/>
    </location>
</feature>
<feature type="strand" evidence="4">
    <location>
        <begin position="217"/>
        <end position="223"/>
    </location>
</feature>
<feature type="strand" evidence="4">
    <location>
        <begin position="226"/>
        <end position="234"/>
    </location>
</feature>
<feature type="strand" evidence="4">
    <location>
        <begin position="237"/>
        <end position="243"/>
    </location>
</feature>
<feature type="helix" evidence="4">
    <location>
        <begin position="250"/>
        <end position="252"/>
    </location>
</feature>
<feature type="strand" evidence="4">
    <location>
        <begin position="257"/>
        <end position="263"/>
    </location>
</feature>
<feature type="strand" evidence="4">
    <location>
        <begin position="266"/>
        <end position="273"/>
    </location>
</feature>
<feature type="helix" evidence="4">
    <location>
        <begin position="281"/>
        <end position="295"/>
    </location>
</feature>
<feature type="strand" evidence="5">
    <location>
        <begin position="310"/>
        <end position="312"/>
    </location>
</feature>
<feature type="strand" evidence="4">
    <location>
        <begin position="318"/>
        <end position="321"/>
    </location>
</feature>
<feature type="strand" evidence="4">
    <location>
        <begin position="327"/>
        <end position="330"/>
    </location>
</feature>
<feature type="strand" evidence="4">
    <location>
        <begin position="335"/>
        <end position="339"/>
    </location>
</feature>
<feature type="strand" evidence="4">
    <location>
        <begin position="346"/>
        <end position="352"/>
    </location>
</feature>
<feature type="strand" evidence="5">
    <location>
        <begin position="353"/>
        <end position="355"/>
    </location>
</feature>
<feature type="strand" evidence="4">
    <location>
        <begin position="357"/>
        <end position="359"/>
    </location>
</feature>
<feature type="helix" evidence="4">
    <location>
        <begin position="360"/>
        <end position="372"/>
    </location>
</feature>
<feature type="helix" evidence="4">
    <location>
        <begin position="373"/>
        <end position="376"/>
    </location>
</feature>
<feature type="turn" evidence="5">
    <location>
        <begin position="380"/>
        <end position="382"/>
    </location>
</feature>
<feature type="strand" evidence="4">
    <location>
        <begin position="389"/>
        <end position="391"/>
    </location>
</feature>
<feature type="strand" evidence="4">
    <location>
        <begin position="393"/>
        <end position="397"/>
    </location>
</feature>
<feature type="helix" evidence="4">
    <location>
        <begin position="403"/>
        <end position="420"/>
    </location>
</feature>
<feature type="strand" evidence="4">
    <location>
        <begin position="427"/>
        <end position="433"/>
    </location>
</feature>
<feature type="helix" evidence="4">
    <location>
        <begin position="436"/>
        <end position="439"/>
    </location>
</feature>
<feature type="helix" evidence="4">
    <location>
        <begin position="442"/>
        <end position="448"/>
    </location>
</feature>
<feature type="turn" evidence="4">
    <location>
        <begin position="449"/>
        <end position="452"/>
    </location>
</feature>
<feature type="strand" evidence="4">
    <location>
        <begin position="453"/>
        <end position="458"/>
    </location>
</feature>
<feature type="helix" evidence="4">
    <location>
        <begin position="460"/>
        <end position="470"/>
    </location>
</feature>
<feature type="helix" evidence="4">
    <location>
        <begin position="472"/>
        <end position="474"/>
    </location>
</feature>
<feature type="helix" evidence="4">
    <location>
        <begin position="480"/>
        <end position="485"/>
    </location>
</feature>
<feature type="helix" evidence="4">
    <location>
        <begin position="487"/>
        <end position="502"/>
    </location>
</feature>
<feature type="turn" evidence="4">
    <location>
        <begin position="506"/>
        <end position="508"/>
    </location>
</feature>
<feature type="strand" evidence="4">
    <location>
        <begin position="509"/>
        <end position="513"/>
    </location>
</feature>
<feature type="helix" evidence="4">
    <location>
        <begin position="522"/>
        <end position="528"/>
    </location>
</feature>
<feature type="helix" evidence="4">
    <location>
        <begin position="531"/>
        <end position="534"/>
    </location>
</feature>
<feature type="strand" evidence="4">
    <location>
        <begin position="538"/>
        <end position="544"/>
    </location>
</feature>
<feature type="helix" evidence="4">
    <location>
        <begin position="545"/>
        <end position="557"/>
    </location>
</feature>
<feature type="helix" evidence="4">
    <location>
        <begin position="560"/>
        <end position="567"/>
    </location>
</feature>
<feature type="helix" evidence="4">
    <location>
        <begin position="575"/>
        <end position="578"/>
    </location>
</feature>
<feature type="helix" evidence="4">
    <location>
        <begin position="591"/>
        <end position="615"/>
    </location>
</feature>
<feature type="strand" evidence="4">
    <location>
        <begin position="620"/>
        <end position="623"/>
    </location>
</feature>
<feature type="strand" evidence="4">
    <location>
        <begin position="629"/>
        <end position="632"/>
    </location>
</feature>
<feature type="helix" evidence="4">
    <location>
        <begin position="634"/>
        <end position="649"/>
    </location>
</feature>
<feature type="helix" evidence="4">
    <location>
        <begin position="655"/>
        <end position="672"/>
    </location>
</feature>
<feature type="helix" evidence="4">
    <location>
        <begin position="686"/>
        <end position="688"/>
    </location>
</feature>
<feature type="helix" evidence="4">
    <location>
        <begin position="690"/>
        <end position="700"/>
    </location>
</feature>
<feature type="helix" evidence="4">
    <location>
        <begin position="702"/>
        <end position="704"/>
    </location>
</feature>
<feature type="helix" evidence="4">
    <location>
        <begin position="706"/>
        <end position="708"/>
    </location>
</feature>
<feature type="helix" evidence="4">
    <location>
        <begin position="711"/>
        <end position="726"/>
    </location>
</feature>
<accession>P9WK16</accession>
<accession>L0T815</accession>
<accession>P0A5J4</accession>
<accession>Q50596</accession>
<comment type="function">
    <text evidence="1 3">Involved in the glycolate utilization. Catalyzes the condensation and subsequent hydrolysis of acetyl-coenzyme A (acetyl-CoA) and glyoxylate to form malate and CoA.</text>
</comment>
<comment type="catalytic activity">
    <reaction evidence="1 3">
        <text>glyoxylate + acetyl-CoA + H2O = (S)-malate + CoA + H(+)</text>
        <dbReference type="Rhea" id="RHEA:18181"/>
        <dbReference type="ChEBI" id="CHEBI:15377"/>
        <dbReference type="ChEBI" id="CHEBI:15378"/>
        <dbReference type="ChEBI" id="CHEBI:15589"/>
        <dbReference type="ChEBI" id="CHEBI:36655"/>
        <dbReference type="ChEBI" id="CHEBI:57287"/>
        <dbReference type="ChEBI" id="CHEBI:57288"/>
        <dbReference type="EC" id="2.3.3.9"/>
    </reaction>
</comment>
<comment type="cofactor">
    <cofactor evidence="1 3">
        <name>Mg(2+)</name>
        <dbReference type="ChEBI" id="CHEBI:18420"/>
    </cofactor>
    <cofactor evidence="1 3">
        <name>Mn(2+)</name>
        <dbReference type="ChEBI" id="CHEBI:29035"/>
    </cofactor>
    <text evidence="1 3">Mg(2+). Mn(2+) is able to replace Mg(2+).</text>
</comment>
<comment type="activity regulation">
    <text evidence="3">By bromopyruvate, oxalate, and phosphoenolpyruvate. Malate inhibits the activity to 50% at 1 mM concentration. Glycolate inhibits only at fairly high concentrations.</text>
</comment>
<comment type="biophysicochemical properties">
    <kinetics>
        <KM evidence="3">30 uM for acetyl-CoA (at pH 7.5)</KM>
        <KM evidence="3">57 uM for glyoxylate (at pH 7.5)</KM>
    </kinetics>
    <phDependence>
        <text evidence="3">Optimum pH is 7.5.</text>
    </phDependence>
</comment>
<comment type="pathway">
    <text evidence="1">Carbohydrate metabolism; glyoxylate cycle; (S)-malate from isocitrate: step 2/2.</text>
</comment>
<comment type="subunit">
    <text evidence="3">Homodimer.</text>
</comment>
<comment type="subcellular location">
    <subcellularLocation>
        <location evidence="1">Cytoplasm</location>
    </subcellularLocation>
</comment>
<comment type="similarity">
    <text evidence="1">Belongs to the malate synthase family. GlcB subfamily.</text>
</comment>
<keyword id="KW-0002">3D-structure</keyword>
<keyword id="KW-0963">Cytoplasm</keyword>
<keyword id="KW-0329">Glyoxylate bypass</keyword>
<keyword id="KW-0460">Magnesium</keyword>
<keyword id="KW-0479">Metal-binding</keyword>
<keyword id="KW-0558">Oxidation</keyword>
<keyword id="KW-1185">Reference proteome</keyword>
<keyword id="KW-0808">Transferase</keyword>
<keyword id="KW-0816">Tricarboxylic acid cycle</keyword>
<evidence type="ECO:0000255" key="1">
    <source>
        <dbReference type="HAMAP-Rule" id="MF_00641"/>
    </source>
</evidence>
<evidence type="ECO:0000256" key="2">
    <source>
        <dbReference type="SAM" id="MobiDB-lite"/>
    </source>
</evidence>
<evidence type="ECO:0000269" key="3">
    <source>
    </source>
</evidence>
<evidence type="ECO:0007829" key="4">
    <source>
        <dbReference type="PDB" id="1N8I"/>
    </source>
</evidence>
<evidence type="ECO:0007829" key="5">
    <source>
        <dbReference type="PDB" id="1N8W"/>
    </source>
</evidence>
<protein>
    <recommendedName>
        <fullName evidence="1">Malate synthase G</fullName>
        <ecNumber evidence="1">2.3.3.9</ecNumber>
    </recommendedName>
</protein>